<protein>
    <recommendedName>
        <fullName evidence="1">Xanthine-guanine phosphoribosyltransferase</fullName>
        <shortName evidence="1">XGPRT</shortName>
        <ecNumber evidence="1">2.4.2.-</ecNumber>
        <ecNumber evidence="1">2.4.2.22</ecNumber>
    </recommendedName>
    <alternativeName>
        <fullName evidence="1">Xanthine phosphoribosyltransferase</fullName>
    </alternativeName>
</protein>
<keyword id="KW-0997">Cell inner membrane</keyword>
<keyword id="KW-1003">Cell membrane</keyword>
<keyword id="KW-0328">Glycosyltransferase</keyword>
<keyword id="KW-0460">Magnesium</keyword>
<keyword id="KW-0472">Membrane</keyword>
<keyword id="KW-0479">Metal-binding</keyword>
<keyword id="KW-0660">Purine salvage</keyword>
<keyword id="KW-1185">Reference proteome</keyword>
<keyword id="KW-0808">Transferase</keyword>
<organism>
    <name type="scientific">Agrobacterium fabrum (strain C58 / ATCC 33970)</name>
    <name type="common">Agrobacterium tumefaciens (strain C58)</name>
    <dbReference type="NCBI Taxonomy" id="176299"/>
    <lineage>
        <taxon>Bacteria</taxon>
        <taxon>Pseudomonadati</taxon>
        <taxon>Pseudomonadota</taxon>
        <taxon>Alphaproteobacteria</taxon>
        <taxon>Hyphomicrobiales</taxon>
        <taxon>Rhizobiaceae</taxon>
        <taxon>Rhizobium/Agrobacterium group</taxon>
        <taxon>Agrobacterium</taxon>
        <taxon>Agrobacterium tumefaciens complex</taxon>
    </lineage>
</organism>
<dbReference type="EC" id="2.4.2.-" evidence="1"/>
<dbReference type="EC" id="2.4.2.22" evidence="1"/>
<dbReference type="EMBL" id="AE007869">
    <property type="protein sequence ID" value="AAK87502.2"/>
    <property type="molecule type" value="Genomic_DNA"/>
</dbReference>
<dbReference type="PIR" id="AD2789">
    <property type="entry name" value="AD2789"/>
</dbReference>
<dbReference type="PIR" id="E97568">
    <property type="entry name" value="E97568"/>
</dbReference>
<dbReference type="RefSeq" id="NP_354717.2">
    <property type="nucleotide sequence ID" value="NC_003062.2"/>
</dbReference>
<dbReference type="RefSeq" id="WP_010971829.1">
    <property type="nucleotide sequence ID" value="NC_003062.2"/>
</dbReference>
<dbReference type="SMR" id="Q8UEM6"/>
<dbReference type="STRING" id="176299.Atu1731"/>
<dbReference type="EnsemblBacteria" id="AAK87502">
    <property type="protein sequence ID" value="AAK87502"/>
    <property type="gene ID" value="Atu1731"/>
</dbReference>
<dbReference type="GeneID" id="1133769"/>
<dbReference type="KEGG" id="atu:Atu1731"/>
<dbReference type="PATRIC" id="fig|176299.10.peg.1744"/>
<dbReference type="eggNOG" id="COG2236">
    <property type="taxonomic scope" value="Bacteria"/>
</dbReference>
<dbReference type="HOGENOM" id="CLU_080904_3_0_5"/>
<dbReference type="OrthoDB" id="9789690at2"/>
<dbReference type="PhylomeDB" id="Q8UEM6"/>
<dbReference type="UniPathway" id="UPA00602">
    <property type="reaction ID" value="UER00658"/>
</dbReference>
<dbReference type="UniPathway" id="UPA00909">
    <property type="reaction ID" value="UER00887"/>
</dbReference>
<dbReference type="Proteomes" id="UP000000813">
    <property type="component" value="Chromosome circular"/>
</dbReference>
<dbReference type="GO" id="GO:0005886">
    <property type="term" value="C:plasma membrane"/>
    <property type="evidence" value="ECO:0007669"/>
    <property type="project" value="UniProtKB-SubCell"/>
</dbReference>
<dbReference type="GO" id="GO:0052657">
    <property type="term" value="F:guanine phosphoribosyltransferase activity"/>
    <property type="evidence" value="ECO:0007669"/>
    <property type="project" value="RHEA"/>
</dbReference>
<dbReference type="GO" id="GO:0004422">
    <property type="term" value="F:hypoxanthine phosphoribosyltransferase activity"/>
    <property type="evidence" value="ECO:0007669"/>
    <property type="project" value="RHEA"/>
</dbReference>
<dbReference type="GO" id="GO:0000287">
    <property type="term" value="F:magnesium ion binding"/>
    <property type="evidence" value="ECO:0007669"/>
    <property type="project" value="UniProtKB-UniRule"/>
</dbReference>
<dbReference type="GO" id="GO:0000310">
    <property type="term" value="F:xanthine phosphoribosyltransferase activity"/>
    <property type="evidence" value="ECO:0007669"/>
    <property type="project" value="UniProtKB-UniRule"/>
</dbReference>
<dbReference type="GO" id="GO:0032263">
    <property type="term" value="P:GMP salvage"/>
    <property type="evidence" value="ECO:0007669"/>
    <property type="project" value="UniProtKB-UniRule"/>
</dbReference>
<dbReference type="GO" id="GO:0006166">
    <property type="term" value="P:purine ribonucleoside salvage"/>
    <property type="evidence" value="ECO:0007669"/>
    <property type="project" value="UniProtKB-KW"/>
</dbReference>
<dbReference type="GO" id="GO:0032265">
    <property type="term" value="P:XMP salvage"/>
    <property type="evidence" value="ECO:0007669"/>
    <property type="project" value="UniProtKB-UniRule"/>
</dbReference>
<dbReference type="CDD" id="cd06223">
    <property type="entry name" value="PRTases_typeI"/>
    <property type="match status" value="1"/>
</dbReference>
<dbReference type="Gene3D" id="3.40.50.2020">
    <property type="match status" value="1"/>
</dbReference>
<dbReference type="HAMAP" id="MF_01903">
    <property type="entry name" value="XGPRT"/>
    <property type="match status" value="1"/>
</dbReference>
<dbReference type="InterPro" id="IPR000836">
    <property type="entry name" value="PRibTrfase_dom"/>
</dbReference>
<dbReference type="InterPro" id="IPR029057">
    <property type="entry name" value="PRTase-like"/>
</dbReference>
<dbReference type="InterPro" id="IPR023747">
    <property type="entry name" value="Xanthine_Guanine_PRibTrfase"/>
</dbReference>
<dbReference type="NCBIfam" id="NF006613">
    <property type="entry name" value="PRK09177.1"/>
    <property type="match status" value="1"/>
</dbReference>
<dbReference type="PANTHER" id="PTHR39563">
    <property type="entry name" value="XANTHINE PHOSPHORIBOSYLTRANSFERASE"/>
    <property type="match status" value="1"/>
</dbReference>
<dbReference type="PANTHER" id="PTHR39563:SF1">
    <property type="entry name" value="XANTHINE-GUANINE PHOSPHORIBOSYLTRANSFERASE"/>
    <property type="match status" value="1"/>
</dbReference>
<dbReference type="Pfam" id="PF00156">
    <property type="entry name" value="Pribosyltran"/>
    <property type="match status" value="1"/>
</dbReference>
<dbReference type="SUPFAM" id="SSF53271">
    <property type="entry name" value="PRTase-like"/>
    <property type="match status" value="1"/>
</dbReference>
<comment type="function">
    <text evidence="1">Purine salvage pathway enzyme that catalyzes the transfer of the ribosyl-5-phosphate group from 5-phospho-alpha-D-ribose 1-diphosphate (PRPP) to the N9 position of the 6-oxopurines guanine and xanthine to form the corresponding ribonucleotides GMP (guanosine 5'-monophosphate) and XMP (xanthosine 5'-monophosphate), with the release of PPi. To a lesser extent, also acts on hypoxanthine.</text>
</comment>
<comment type="catalytic activity">
    <reaction evidence="1">
        <text>GMP + diphosphate = guanine + 5-phospho-alpha-D-ribose 1-diphosphate</text>
        <dbReference type="Rhea" id="RHEA:25424"/>
        <dbReference type="ChEBI" id="CHEBI:16235"/>
        <dbReference type="ChEBI" id="CHEBI:33019"/>
        <dbReference type="ChEBI" id="CHEBI:58017"/>
        <dbReference type="ChEBI" id="CHEBI:58115"/>
    </reaction>
    <physiologicalReaction direction="right-to-left" evidence="1">
        <dbReference type="Rhea" id="RHEA:25426"/>
    </physiologicalReaction>
</comment>
<comment type="catalytic activity">
    <reaction evidence="1">
        <text>XMP + diphosphate = xanthine + 5-phospho-alpha-D-ribose 1-diphosphate</text>
        <dbReference type="Rhea" id="RHEA:10800"/>
        <dbReference type="ChEBI" id="CHEBI:17712"/>
        <dbReference type="ChEBI" id="CHEBI:33019"/>
        <dbReference type="ChEBI" id="CHEBI:57464"/>
        <dbReference type="ChEBI" id="CHEBI:58017"/>
        <dbReference type="EC" id="2.4.2.22"/>
    </reaction>
    <physiologicalReaction direction="right-to-left" evidence="1">
        <dbReference type="Rhea" id="RHEA:10802"/>
    </physiologicalReaction>
</comment>
<comment type="catalytic activity">
    <reaction evidence="1">
        <text>IMP + diphosphate = hypoxanthine + 5-phospho-alpha-D-ribose 1-diphosphate</text>
        <dbReference type="Rhea" id="RHEA:17973"/>
        <dbReference type="ChEBI" id="CHEBI:17368"/>
        <dbReference type="ChEBI" id="CHEBI:33019"/>
        <dbReference type="ChEBI" id="CHEBI:58017"/>
        <dbReference type="ChEBI" id="CHEBI:58053"/>
    </reaction>
    <physiologicalReaction direction="right-to-left" evidence="1">
        <dbReference type="Rhea" id="RHEA:17975"/>
    </physiologicalReaction>
</comment>
<comment type="cofactor">
    <cofactor evidence="1">
        <name>Mg(2+)</name>
        <dbReference type="ChEBI" id="CHEBI:18420"/>
    </cofactor>
</comment>
<comment type="pathway">
    <text evidence="1">Purine metabolism; GMP biosynthesis via salvage pathway; GMP from guanine: step 1/1.</text>
</comment>
<comment type="pathway">
    <text evidence="1">Purine metabolism; XMP biosynthesis via salvage pathway; XMP from xanthine: step 1/1.</text>
</comment>
<comment type="subunit">
    <text evidence="1">Homotetramer.</text>
</comment>
<comment type="subcellular location">
    <subcellularLocation>
        <location evidence="1">Cell inner membrane</location>
        <topology evidence="1">Peripheral membrane protein</topology>
    </subcellularLocation>
</comment>
<comment type="similarity">
    <text evidence="1">Belongs to the purine/pyrimidine phosphoribosyltransferase family. XGPT subfamily.</text>
</comment>
<accession>Q8UEM6</accession>
<accession>Q7CYN3</accession>
<feature type="chain" id="PRO_0000139656" description="Xanthine-guanine phosphoribosyltransferase">
    <location>
        <begin position="1"/>
        <end position="165"/>
    </location>
</feature>
<feature type="binding site" evidence="1">
    <location>
        <begin position="41"/>
        <end position="42"/>
    </location>
    <ligand>
        <name>5-phospho-alpha-D-ribose 1-diphosphate</name>
        <dbReference type="ChEBI" id="CHEBI:58017"/>
    </ligand>
</feature>
<feature type="binding site" evidence="1">
    <location>
        <begin position="98"/>
        <end position="106"/>
    </location>
    <ligand>
        <name>5-phospho-alpha-D-ribose 1-diphosphate</name>
        <dbReference type="ChEBI" id="CHEBI:58017"/>
    </ligand>
</feature>
<feature type="binding site" evidence="1">
    <location>
        <position position="99"/>
    </location>
    <ligand>
        <name>Mg(2+)</name>
        <dbReference type="ChEBI" id="CHEBI:18420"/>
    </ligand>
</feature>
<feature type="binding site" evidence="1">
    <location>
        <begin position="102"/>
        <end position="106"/>
    </location>
    <ligand>
        <name>GMP</name>
        <dbReference type="ChEBI" id="CHEBI:58115"/>
    </ligand>
</feature>
<feature type="binding site" evidence="1">
    <location>
        <position position="102"/>
    </location>
    <ligand>
        <name>guanine</name>
        <dbReference type="ChEBI" id="CHEBI:16235"/>
    </ligand>
</feature>
<feature type="binding site" evidence="1">
    <location>
        <position position="102"/>
    </location>
    <ligand>
        <name>xanthine</name>
        <dbReference type="ChEBI" id="CHEBI:17712"/>
    </ligand>
</feature>
<feature type="binding site" evidence="1">
    <location>
        <begin position="144"/>
        <end position="145"/>
    </location>
    <ligand>
        <name>GMP</name>
        <dbReference type="ChEBI" id="CHEBI:58115"/>
    </ligand>
</feature>
<feature type="binding site" evidence="1">
    <location>
        <position position="145"/>
    </location>
    <ligand>
        <name>guanine</name>
        <dbReference type="ChEBI" id="CHEBI:16235"/>
    </ligand>
</feature>
<feature type="binding site" evidence="1">
    <location>
        <position position="145"/>
    </location>
    <ligand>
        <name>xanthine</name>
        <dbReference type="ChEBI" id="CHEBI:17712"/>
    </ligand>
</feature>
<reference key="1">
    <citation type="journal article" date="2001" name="Science">
        <title>The genome of the natural genetic engineer Agrobacterium tumefaciens C58.</title>
        <authorList>
            <person name="Wood D.W."/>
            <person name="Setubal J.C."/>
            <person name="Kaul R."/>
            <person name="Monks D.E."/>
            <person name="Kitajima J.P."/>
            <person name="Okura V.K."/>
            <person name="Zhou Y."/>
            <person name="Chen L."/>
            <person name="Wood G.E."/>
            <person name="Almeida N.F. Jr."/>
            <person name="Woo L."/>
            <person name="Chen Y."/>
            <person name="Paulsen I.T."/>
            <person name="Eisen J.A."/>
            <person name="Karp P.D."/>
            <person name="Bovee D. Sr."/>
            <person name="Chapman P."/>
            <person name="Clendenning J."/>
            <person name="Deatherage G."/>
            <person name="Gillet W."/>
            <person name="Grant C."/>
            <person name="Kutyavin T."/>
            <person name="Levy R."/>
            <person name="Li M.-J."/>
            <person name="McClelland E."/>
            <person name="Palmieri A."/>
            <person name="Raymond C."/>
            <person name="Rouse G."/>
            <person name="Saenphimmachak C."/>
            <person name="Wu Z."/>
            <person name="Romero P."/>
            <person name="Gordon D."/>
            <person name="Zhang S."/>
            <person name="Yoo H."/>
            <person name="Tao Y."/>
            <person name="Biddle P."/>
            <person name="Jung M."/>
            <person name="Krespan W."/>
            <person name="Perry M."/>
            <person name="Gordon-Kamm B."/>
            <person name="Liao L."/>
            <person name="Kim S."/>
            <person name="Hendrick C."/>
            <person name="Zhao Z.-Y."/>
            <person name="Dolan M."/>
            <person name="Chumley F."/>
            <person name="Tingey S.V."/>
            <person name="Tomb J.-F."/>
            <person name="Gordon M.P."/>
            <person name="Olson M.V."/>
            <person name="Nester E.W."/>
        </authorList>
    </citation>
    <scope>NUCLEOTIDE SEQUENCE [LARGE SCALE GENOMIC DNA]</scope>
    <source>
        <strain>C58 / ATCC 33970</strain>
    </source>
</reference>
<reference key="2">
    <citation type="journal article" date="2001" name="Science">
        <title>Genome sequence of the plant pathogen and biotechnology agent Agrobacterium tumefaciens C58.</title>
        <authorList>
            <person name="Goodner B."/>
            <person name="Hinkle G."/>
            <person name="Gattung S."/>
            <person name="Miller N."/>
            <person name="Blanchard M."/>
            <person name="Qurollo B."/>
            <person name="Goldman B.S."/>
            <person name="Cao Y."/>
            <person name="Askenazi M."/>
            <person name="Halling C."/>
            <person name="Mullin L."/>
            <person name="Houmiel K."/>
            <person name="Gordon J."/>
            <person name="Vaudin M."/>
            <person name="Iartchouk O."/>
            <person name="Epp A."/>
            <person name="Liu F."/>
            <person name="Wollam C."/>
            <person name="Allinger M."/>
            <person name="Doughty D."/>
            <person name="Scott C."/>
            <person name="Lappas C."/>
            <person name="Markelz B."/>
            <person name="Flanagan C."/>
            <person name="Crowell C."/>
            <person name="Gurson J."/>
            <person name="Lomo C."/>
            <person name="Sear C."/>
            <person name="Strub G."/>
            <person name="Cielo C."/>
            <person name="Slater S."/>
        </authorList>
    </citation>
    <scope>NUCLEOTIDE SEQUENCE [LARGE SCALE GENOMIC DNA]</scope>
    <source>
        <strain>C58 / ATCC 33970</strain>
    </source>
</reference>
<gene>
    <name evidence="1" type="primary">gpt</name>
    <name type="ordered locus">Atu1731</name>
    <name type="ORF">AGR_C_3180</name>
</gene>
<sequence length="165" mass="18328">MSLPDKAFPVSWDQFHRDARALAWRLAGLDKEFRAIVCITRGGLVPAAIISRELNIRMIDTVCIATRHDYVNQGDTVLLKGVAPELTTDAGEGVLVVDDLTDTGKTALEVREMLPRAHFACVYAKPKGVPTIDTFVTEVSQDTWIYFPWDMGFTYQEPIAKGSRG</sequence>
<evidence type="ECO:0000255" key="1">
    <source>
        <dbReference type="HAMAP-Rule" id="MF_01903"/>
    </source>
</evidence>
<name>XGPT_AGRFC</name>
<proteinExistence type="inferred from homology"/>